<evidence type="ECO:0000255" key="1">
    <source>
        <dbReference type="HAMAP-Rule" id="MF_02204"/>
    </source>
</evidence>
<evidence type="ECO:0000256" key="2">
    <source>
        <dbReference type="SAM" id="MobiDB-lite"/>
    </source>
</evidence>
<keyword id="KW-0131">Cell cycle</keyword>
<keyword id="KW-0132">Cell division</keyword>
<keyword id="KW-0998">Cell outer membrane</keyword>
<keyword id="KW-0449">Lipoprotein</keyword>
<keyword id="KW-0472">Membrane</keyword>
<keyword id="KW-0564">Palmitate</keyword>
<keyword id="KW-1185">Reference proteome</keyword>
<keyword id="KW-0732">Signal</keyword>
<reference key="1">
    <citation type="journal article" date="2001" name="Nature">
        <title>Genome sequence of enterohaemorrhagic Escherichia coli O157:H7.</title>
        <authorList>
            <person name="Perna N.T."/>
            <person name="Plunkett G. III"/>
            <person name="Burland V."/>
            <person name="Mau B."/>
            <person name="Glasner J.D."/>
            <person name="Rose D.J."/>
            <person name="Mayhew G.F."/>
            <person name="Evans P.S."/>
            <person name="Gregor J."/>
            <person name="Kirkpatrick H.A."/>
            <person name="Posfai G."/>
            <person name="Hackett J."/>
            <person name="Klink S."/>
            <person name="Boutin A."/>
            <person name="Shao Y."/>
            <person name="Miller L."/>
            <person name="Grotbeck E.J."/>
            <person name="Davis N.W."/>
            <person name="Lim A."/>
            <person name="Dimalanta E.T."/>
            <person name="Potamousis K."/>
            <person name="Apodaca J."/>
            <person name="Anantharaman T.S."/>
            <person name="Lin J."/>
            <person name="Yen G."/>
            <person name="Schwartz D.C."/>
            <person name="Welch R.A."/>
            <person name="Blattner F.R."/>
        </authorList>
    </citation>
    <scope>NUCLEOTIDE SEQUENCE [LARGE SCALE GENOMIC DNA]</scope>
    <source>
        <strain>O157:H7 / EDL933 / ATCC 700927 / EHEC</strain>
    </source>
</reference>
<reference key="2">
    <citation type="journal article" date="2001" name="DNA Res.">
        <title>Complete genome sequence of enterohemorrhagic Escherichia coli O157:H7 and genomic comparison with a laboratory strain K-12.</title>
        <authorList>
            <person name="Hayashi T."/>
            <person name="Makino K."/>
            <person name="Ohnishi M."/>
            <person name="Kurokawa K."/>
            <person name="Ishii K."/>
            <person name="Yokoyama K."/>
            <person name="Han C.-G."/>
            <person name="Ohtsubo E."/>
            <person name="Nakayama K."/>
            <person name="Murata T."/>
            <person name="Tanaka M."/>
            <person name="Tobe T."/>
            <person name="Iida T."/>
            <person name="Takami H."/>
            <person name="Honda T."/>
            <person name="Sasakawa C."/>
            <person name="Ogasawara N."/>
            <person name="Yasunaga T."/>
            <person name="Kuhara S."/>
            <person name="Shiba T."/>
            <person name="Hattori M."/>
            <person name="Shinagawa H."/>
        </authorList>
    </citation>
    <scope>NUCLEOTIDE SEQUENCE [LARGE SCALE GENOMIC DNA]</scope>
    <source>
        <strain>O157:H7 / Sakai / RIMD 0509952 / EHEC</strain>
    </source>
</reference>
<organism>
    <name type="scientific">Escherichia coli O157:H7</name>
    <dbReference type="NCBI Taxonomy" id="83334"/>
    <lineage>
        <taxon>Bacteria</taxon>
        <taxon>Pseudomonadati</taxon>
        <taxon>Pseudomonadota</taxon>
        <taxon>Gammaproteobacteria</taxon>
        <taxon>Enterobacterales</taxon>
        <taxon>Enterobacteriaceae</taxon>
        <taxon>Escherichia</taxon>
    </lineage>
</organism>
<name>PAL_ECO57</name>
<proteinExistence type="inferred from homology"/>
<dbReference type="EMBL" id="AE005174">
    <property type="protein sequence ID" value="AAG55077.1"/>
    <property type="molecule type" value="Genomic_DNA"/>
</dbReference>
<dbReference type="EMBL" id="BA000007">
    <property type="protein sequence ID" value="BAB34199.1"/>
    <property type="molecule type" value="Genomic_DNA"/>
</dbReference>
<dbReference type="PIR" id="A85577">
    <property type="entry name" value="A85577"/>
</dbReference>
<dbReference type="PIR" id="H90725">
    <property type="entry name" value="H90725"/>
</dbReference>
<dbReference type="RefSeq" id="NP_308803.1">
    <property type="nucleotide sequence ID" value="NC_002695.1"/>
</dbReference>
<dbReference type="RefSeq" id="WP_001295306.1">
    <property type="nucleotide sequence ID" value="NZ_VOAI01000019.1"/>
</dbReference>
<dbReference type="SMR" id="P0A913"/>
<dbReference type="STRING" id="155864.Z0909"/>
<dbReference type="GeneID" id="917510"/>
<dbReference type="GeneID" id="93776743"/>
<dbReference type="KEGG" id="ece:Z0909"/>
<dbReference type="KEGG" id="ecs:ECs_0776"/>
<dbReference type="PATRIC" id="fig|386585.9.peg.895"/>
<dbReference type="eggNOG" id="COG2885">
    <property type="taxonomic scope" value="Bacteria"/>
</dbReference>
<dbReference type="HOGENOM" id="CLU_016890_9_4_6"/>
<dbReference type="OMA" id="STESCWS"/>
<dbReference type="Proteomes" id="UP000000558">
    <property type="component" value="Chromosome"/>
</dbReference>
<dbReference type="Proteomes" id="UP000002519">
    <property type="component" value="Chromosome"/>
</dbReference>
<dbReference type="GO" id="GO:0009279">
    <property type="term" value="C:cell outer membrane"/>
    <property type="evidence" value="ECO:0007669"/>
    <property type="project" value="UniProtKB-SubCell"/>
</dbReference>
<dbReference type="GO" id="GO:0051301">
    <property type="term" value="P:cell division"/>
    <property type="evidence" value="ECO:0007669"/>
    <property type="project" value="UniProtKB-UniRule"/>
</dbReference>
<dbReference type="CDD" id="cd07185">
    <property type="entry name" value="OmpA_C-like"/>
    <property type="match status" value="1"/>
</dbReference>
<dbReference type="FunFam" id="3.30.1330.60:FF:000002">
    <property type="entry name" value="Peptidoglycan-associated lipoprotein"/>
    <property type="match status" value="1"/>
</dbReference>
<dbReference type="Gene3D" id="3.30.1330.60">
    <property type="entry name" value="OmpA-like domain"/>
    <property type="match status" value="1"/>
</dbReference>
<dbReference type="HAMAP" id="MF_02204">
    <property type="entry name" value="Pal"/>
    <property type="match status" value="1"/>
</dbReference>
<dbReference type="InterPro" id="IPR050330">
    <property type="entry name" value="Bact_OuterMem_StrucFunc"/>
</dbReference>
<dbReference type="InterPro" id="IPR006664">
    <property type="entry name" value="OMP_bac"/>
</dbReference>
<dbReference type="InterPro" id="IPR006665">
    <property type="entry name" value="OmpA-like"/>
</dbReference>
<dbReference type="InterPro" id="IPR006690">
    <property type="entry name" value="OMPA-like_CS"/>
</dbReference>
<dbReference type="InterPro" id="IPR036737">
    <property type="entry name" value="OmpA-like_sf"/>
</dbReference>
<dbReference type="InterPro" id="IPR039001">
    <property type="entry name" value="Pal"/>
</dbReference>
<dbReference type="InterPro" id="IPR014169">
    <property type="entry name" value="Pal_lipo_C"/>
</dbReference>
<dbReference type="NCBIfam" id="TIGR02802">
    <property type="entry name" value="Pal_lipo"/>
    <property type="match status" value="1"/>
</dbReference>
<dbReference type="NCBIfam" id="NF008067">
    <property type="entry name" value="PRK10802.1"/>
    <property type="match status" value="1"/>
</dbReference>
<dbReference type="PANTHER" id="PTHR30329:SF21">
    <property type="entry name" value="LIPOPROTEIN YIAD-RELATED"/>
    <property type="match status" value="1"/>
</dbReference>
<dbReference type="PANTHER" id="PTHR30329">
    <property type="entry name" value="STATOR ELEMENT OF FLAGELLAR MOTOR COMPLEX"/>
    <property type="match status" value="1"/>
</dbReference>
<dbReference type="Pfam" id="PF00691">
    <property type="entry name" value="OmpA"/>
    <property type="match status" value="1"/>
</dbReference>
<dbReference type="PRINTS" id="PR01021">
    <property type="entry name" value="OMPADOMAIN"/>
</dbReference>
<dbReference type="SUPFAM" id="SSF103088">
    <property type="entry name" value="OmpA-like"/>
    <property type="match status" value="1"/>
</dbReference>
<dbReference type="PROSITE" id="PS01068">
    <property type="entry name" value="OMPA_1"/>
    <property type="match status" value="1"/>
</dbReference>
<dbReference type="PROSITE" id="PS51123">
    <property type="entry name" value="OMPA_2"/>
    <property type="match status" value="1"/>
</dbReference>
<dbReference type="PROSITE" id="PS51257">
    <property type="entry name" value="PROKAR_LIPOPROTEIN"/>
    <property type="match status" value="1"/>
</dbReference>
<protein>
    <recommendedName>
        <fullName evidence="1">Peptidoglycan-associated lipoprotein</fullName>
        <shortName evidence="1">PAL</shortName>
    </recommendedName>
</protein>
<comment type="function">
    <text evidence="1">Part of the Tol-Pal system, which plays a role in outer membrane invagination during cell division and is important for maintaining outer membrane integrity.</text>
</comment>
<comment type="subunit">
    <text evidence="1">The Tol-Pal system is composed of five core proteins: the inner membrane proteins TolA, TolQ and TolR, the periplasmic protein TolB and the outer membrane protein Pal. They form a network linking the inner and outer membranes and the peptidoglycan layer.</text>
</comment>
<comment type="subcellular location">
    <subcellularLocation>
        <location evidence="1">Cell outer membrane</location>
        <topology evidence="1">Lipid-anchor</topology>
    </subcellularLocation>
</comment>
<comment type="similarity">
    <text evidence="1">Belongs to the Pal lipoprotein family.</text>
</comment>
<accession>P0A913</accession>
<accession>P07176</accession>
<feature type="signal peptide" evidence="1">
    <location>
        <begin position="1"/>
        <end position="21"/>
    </location>
</feature>
<feature type="chain" id="PRO_0000020121" description="Peptidoglycan-associated lipoprotein" evidence="1">
    <location>
        <begin position="22"/>
        <end position="173"/>
    </location>
</feature>
<feature type="domain" description="OmpA-like" evidence="1">
    <location>
        <begin position="60"/>
        <end position="173"/>
    </location>
</feature>
<feature type="region of interest" description="Disordered" evidence="2">
    <location>
        <begin position="30"/>
        <end position="58"/>
    </location>
</feature>
<feature type="compositionally biased region" description="Gly residues" evidence="2">
    <location>
        <begin position="35"/>
        <end position="50"/>
    </location>
</feature>
<feature type="lipid moiety-binding region" description="N-palmitoyl cysteine" evidence="1">
    <location>
        <position position="22"/>
    </location>
</feature>
<feature type="lipid moiety-binding region" description="S-diacylglycerol cysteine" evidence="1">
    <location>
        <position position="22"/>
    </location>
</feature>
<gene>
    <name evidence="1" type="primary">pal</name>
    <name type="ordered locus">Z0909</name>
    <name type="ordered locus">ECs0776</name>
</gene>
<sequence>MQLNKVLKGLMIALPVMAIAACSSNKNASNDGSEGMLGAGTGMDANGGNGNMSSEEQARLQMQQLQQNNIVYFDLDKYDIRSDFAQMLDAHANFLRSNPSYKVTVEGHADERGTPEYNISLGERRANAVKMYLQGKGVSADQISIVSYGKEKPAVLGHDEAAYSKNRRAVLVY</sequence>